<organism>
    <name type="scientific">Xylella fastidiosa (strain 9a5c)</name>
    <dbReference type="NCBI Taxonomy" id="160492"/>
    <lineage>
        <taxon>Bacteria</taxon>
        <taxon>Pseudomonadati</taxon>
        <taxon>Pseudomonadota</taxon>
        <taxon>Gammaproteobacteria</taxon>
        <taxon>Lysobacterales</taxon>
        <taxon>Lysobacteraceae</taxon>
        <taxon>Xylella</taxon>
    </lineage>
</organism>
<gene>
    <name evidence="1" type="primary">ubiA</name>
    <name type="ordered locus">XF_0068</name>
</gene>
<evidence type="ECO:0000255" key="1">
    <source>
        <dbReference type="HAMAP-Rule" id="MF_01635"/>
    </source>
</evidence>
<evidence type="ECO:0000305" key="2"/>
<name>UBIA_XYLFA</name>
<comment type="function">
    <text evidence="1">Catalyzes the prenylation of para-hydroxybenzoate (PHB) with an all-trans polyprenyl group. Mediates the second step in the final reaction sequence of ubiquinone-8 (UQ-8) biosynthesis, which is the condensation of the polyisoprenoid side chain with PHB, generating the first membrane-bound Q intermediate 3-octaprenyl-4-hydroxybenzoate.</text>
</comment>
<comment type="catalytic activity">
    <reaction evidence="1">
        <text>all-trans-octaprenyl diphosphate + 4-hydroxybenzoate = 4-hydroxy-3-(all-trans-octaprenyl)benzoate + diphosphate</text>
        <dbReference type="Rhea" id="RHEA:27782"/>
        <dbReference type="ChEBI" id="CHEBI:1617"/>
        <dbReference type="ChEBI" id="CHEBI:17879"/>
        <dbReference type="ChEBI" id="CHEBI:33019"/>
        <dbReference type="ChEBI" id="CHEBI:57711"/>
        <dbReference type="EC" id="2.5.1.39"/>
    </reaction>
</comment>
<comment type="cofactor">
    <cofactor evidence="1">
        <name>Mg(2+)</name>
        <dbReference type="ChEBI" id="CHEBI:18420"/>
    </cofactor>
</comment>
<comment type="pathway">
    <text evidence="1">Cofactor biosynthesis; ubiquinone biosynthesis.</text>
</comment>
<comment type="subcellular location">
    <subcellularLocation>
        <location evidence="1">Cell inner membrane</location>
        <topology evidence="1">Multi-pass membrane protein</topology>
    </subcellularLocation>
</comment>
<comment type="similarity">
    <text evidence="1">Belongs to the UbiA prenyltransferase family.</text>
</comment>
<comment type="sequence caution" evidence="2">
    <conflict type="erroneous initiation">
        <sequence resource="EMBL-CDS" id="AAF82881"/>
    </conflict>
</comment>
<protein>
    <recommendedName>
        <fullName evidence="1">4-hydroxybenzoate octaprenyltransferase</fullName>
        <ecNumber evidence="1">2.5.1.39</ecNumber>
    </recommendedName>
    <alternativeName>
        <fullName evidence="1">4-HB polyprenyltransferase</fullName>
    </alternativeName>
</protein>
<accession>Q9PH76</accession>
<sequence>MAYERFTSAITLLMHWRNRLDPYWKLARGDRPVGFLLLLWPTWWALWLAAGGVPPWWTLCVFTTGIWLTRSAGCVINDYTDRWLDPHVERTRIRPLVTGAVSPRNALLMFATLMLIAFGLVLTMNQLTVLLSVVGLFLAMTYPYLKRYTYLPQVYLGLAFGWGIPMAFAAIQGKVPTQAWLLYVANILWTTAYDTWCAMVDRDDDIKMGAKSTAILFADLDLTVQGVLYTLMLFTLCLVGLRATLSHTYWISLIAAVALIGYQFIIARRREPTACFRAFMHNNWVGMTIFAGIALATTH</sequence>
<reference key="1">
    <citation type="journal article" date="2000" name="Nature">
        <title>The genome sequence of the plant pathogen Xylella fastidiosa.</title>
        <authorList>
            <person name="Simpson A.J.G."/>
            <person name="Reinach F.C."/>
            <person name="Arruda P."/>
            <person name="Abreu F.A."/>
            <person name="Acencio M."/>
            <person name="Alvarenga R."/>
            <person name="Alves L.M.C."/>
            <person name="Araya J.E."/>
            <person name="Baia G.S."/>
            <person name="Baptista C.S."/>
            <person name="Barros M.H."/>
            <person name="Bonaccorsi E.D."/>
            <person name="Bordin S."/>
            <person name="Bove J.M."/>
            <person name="Briones M.R.S."/>
            <person name="Bueno M.R.P."/>
            <person name="Camargo A.A."/>
            <person name="Camargo L.E.A."/>
            <person name="Carraro D.M."/>
            <person name="Carrer H."/>
            <person name="Colauto N.B."/>
            <person name="Colombo C."/>
            <person name="Costa F.F."/>
            <person name="Costa M.C.R."/>
            <person name="Costa-Neto C.M."/>
            <person name="Coutinho L.L."/>
            <person name="Cristofani M."/>
            <person name="Dias-Neto E."/>
            <person name="Docena C."/>
            <person name="El-Dorry H."/>
            <person name="Facincani A.P."/>
            <person name="Ferreira A.J.S."/>
            <person name="Ferreira V.C.A."/>
            <person name="Ferro J.A."/>
            <person name="Fraga J.S."/>
            <person name="Franca S.C."/>
            <person name="Franco M.C."/>
            <person name="Frohme M."/>
            <person name="Furlan L.R."/>
            <person name="Garnier M."/>
            <person name="Goldman G.H."/>
            <person name="Goldman M.H.S."/>
            <person name="Gomes S.L."/>
            <person name="Gruber A."/>
            <person name="Ho P.L."/>
            <person name="Hoheisel J.D."/>
            <person name="Junqueira M.L."/>
            <person name="Kemper E.L."/>
            <person name="Kitajima J.P."/>
            <person name="Krieger J.E."/>
            <person name="Kuramae E.E."/>
            <person name="Laigret F."/>
            <person name="Lambais M.R."/>
            <person name="Leite L.C.C."/>
            <person name="Lemos E.G.M."/>
            <person name="Lemos M.V.F."/>
            <person name="Lopes S.A."/>
            <person name="Lopes C.R."/>
            <person name="Machado J.A."/>
            <person name="Machado M.A."/>
            <person name="Madeira A.M.B.N."/>
            <person name="Madeira H.M.F."/>
            <person name="Marino C.L."/>
            <person name="Marques M.V."/>
            <person name="Martins E.A.L."/>
            <person name="Martins E.M.F."/>
            <person name="Matsukuma A.Y."/>
            <person name="Menck C.F.M."/>
            <person name="Miracca E.C."/>
            <person name="Miyaki C.Y."/>
            <person name="Monteiro-Vitorello C.B."/>
            <person name="Moon D.H."/>
            <person name="Nagai M.A."/>
            <person name="Nascimento A.L.T.O."/>
            <person name="Netto L.E.S."/>
            <person name="Nhani A. Jr."/>
            <person name="Nobrega F.G."/>
            <person name="Nunes L.R."/>
            <person name="Oliveira M.A."/>
            <person name="de Oliveira M.C."/>
            <person name="de Oliveira R.C."/>
            <person name="Palmieri D.A."/>
            <person name="Paris A."/>
            <person name="Peixoto B.R."/>
            <person name="Pereira G.A.G."/>
            <person name="Pereira H.A. Jr."/>
            <person name="Pesquero J.B."/>
            <person name="Quaggio R.B."/>
            <person name="Roberto P.G."/>
            <person name="Rodrigues V."/>
            <person name="de Rosa A.J.M."/>
            <person name="de Rosa V.E. Jr."/>
            <person name="de Sa R.G."/>
            <person name="Santelli R.V."/>
            <person name="Sawasaki H.E."/>
            <person name="da Silva A.C.R."/>
            <person name="da Silva A.M."/>
            <person name="da Silva F.R."/>
            <person name="Silva W.A. Jr."/>
            <person name="da Silveira J.F."/>
            <person name="Silvestri M.L.Z."/>
            <person name="Siqueira W.J."/>
            <person name="de Souza A.A."/>
            <person name="de Souza A.P."/>
            <person name="Terenzi M.F."/>
            <person name="Truffi D."/>
            <person name="Tsai S.M."/>
            <person name="Tsuhako M.H."/>
            <person name="Vallada H."/>
            <person name="Van Sluys M.A."/>
            <person name="Verjovski-Almeida S."/>
            <person name="Vettore A.L."/>
            <person name="Zago M.A."/>
            <person name="Zatz M."/>
            <person name="Meidanis J."/>
            <person name="Setubal J.C."/>
        </authorList>
    </citation>
    <scope>NUCLEOTIDE SEQUENCE [LARGE SCALE GENOMIC DNA]</scope>
    <source>
        <strain>9a5c</strain>
    </source>
</reference>
<dbReference type="EC" id="2.5.1.39" evidence="1"/>
<dbReference type="EMBL" id="AE003849">
    <property type="protein sequence ID" value="AAF82881.1"/>
    <property type="status" value="ALT_INIT"/>
    <property type="molecule type" value="Genomic_DNA"/>
</dbReference>
<dbReference type="PIR" id="H82852">
    <property type="entry name" value="H82852"/>
</dbReference>
<dbReference type="RefSeq" id="WP_031337464.1">
    <property type="nucleotide sequence ID" value="NC_002488.3"/>
</dbReference>
<dbReference type="SMR" id="Q9PH76"/>
<dbReference type="STRING" id="160492.XF_0068"/>
<dbReference type="KEGG" id="xfa:XF_0068"/>
<dbReference type="eggNOG" id="COG0382">
    <property type="taxonomic scope" value="Bacteria"/>
</dbReference>
<dbReference type="HOGENOM" id="CLU_034879_1_0_6"/>
<dbReference type="UniPathway" id="UPA00232"/>
<dbReference type="Proteomes" id="UP000000812">
    <property type="component" value="Chromosome"/>
</dbReference>
<dbReference type="GO" id="GO:0005886">
    <property type="term" value="C:plasma membrane"/>
    <property type="evidence" value="ECO:0007669"/>
    <property type="project" value="UniProtKB-SubCell"/>
</dbReference>
<dbReference type="GO" id="GO:0008412">
    <property type="term" value="F:4-hydroxybenzoate polyprenyltransferase activity"/>
    <property type="evidence" value="ECO:0007669"/>
    <property type="project" value="UniProtKB-UniRule"/>
</dbReference>
<dbReference type="GO" id="GO:0006744">
    <property type="term" value="P:ubiquinone biosynthetic process"/>
    <property type="evidence" value="ECO:0007669"/>
    <property type="project" value="UniProtKB-UniRule"/>
</dbReference>
<dbReference type="CDD" id="cd13959">
    <property type="entry name" value="PT_UbiA_COQ2"/>
    <property type="match status" value="1"/>
</dbReference>
<dbReference type="FunFam" id="1.10.357.140:FF:000002">
    <property type="entry name" value="4-hydroxybenzoate octaprenyltransferase"/>
    <property type="match status" value="1"/>
</dbReference>
<dbReference type="FunFam" id="1.20.120.1780:FF:000001">
    <property type="entry name" value="4-hydroxybenzoate octaprenyltransferase"/>
    <property type="match status" value="1"/>
</dbReference>
<dbReference type="Gene3D" id="1.10.357.140">
    <property type="entry name" value="UbiA prenyltransferase"/>
    <property type="match status" value="1"/>
</dbReference>
<dbReference type="Gene3D" id="1.20.120.1780">
    <property type="entry name" value="UbiA prenyltransferase"/>
    <property type="match status" value="1"/>
</dbReference>
<dbReference type="HAMAP" id="MF_01635">
    <property type="entry name" value="UbiA"/>
    <property type="match status" value="1"/>
</dbReference>
<dbReference type="InterPro" id="IPR006370">
    <property type="entry name" value="HB_polyprenyltransferase-like"/>
</dbReference>
<dbReference type="InterPro" id="IPR039653">
    <property type="entry name" value="Prenyltransferase"/>
</dbReference>
<dbReference type="InterPro" id="IPR000537">
    <property type="entry name" value="UbiA_prenyltransferase"/>
</dbReference>
<dbReference type="InterPro" id="IPR030470">
    <property type="entry name" value="UbiA_prenylTrfase_CS"/>
</dbReference>
<dbReference type="InterPro" id="IPR044878">
    <property type="entry name" value="UbiA_sf"/>
</dbReference>
<dbReference type="NCBIfam" id="TIGR01474">
    <property type="entry name" value="ubiA_proteo"/>
    <property type="match status" value="1"/>
</dbReference>
<dbReference type="PANTHER" id="PTHR11048:SF28">
    <property type="entry name" value="4-HYDROXYBENZOATE POLYPRENYLTRANSFERASE, MITOCHONDRIAL"/>
    <property type="match status" value="1"/>
</dbReference>
<dbReference type="PANTHER" id="PTHR11048">
    <property type="entry name" value="PRENYLTRANSFERASES"/>
    <property type="match status" value="1"/>
</dbReference>
<dbReference type="Pfam" id="PF01040">
    <property type="entry name" value="UbiA"/>
    <property type="match status" value="1"/>
</dbReference>
<dbReference type="PROSITE" id="PS00943">
    <property type="entry name" value="UBIA"/>
    <property type="match status" value="1"/>
</dbReference>
<proteinExistence type="inferred from homology"/>
<keyword id="KW-0997">Cell inner membrane</keyword>
<keyword id="KW-1003">Cell membrane</keyword>
<keyword id="KW-0460">Magnesium</keyword>
<keyword id="KW-0472">Membrane</keyword>
<keyword id="KW-0808">Transferase</keyword>
<keyword id="KW-0812">Transmembrane</keyword>
<keyword id="KW-1133">Transmembrane helix</keyword>
<keyword id="KW-0831">Ubiquinone biosynthesis</keyword>
<feature type="chain" id="PRO_0000262860" description="4-hydroxybenzoate octaprenyltransferase">
    <location>
        <begin position="1"/>
        <end position="299"/>
    </location>
</feature>
<feature type="transmembrane region" description="Helical" evidence="1">
    <location>
        <begin position="33"/>
        <end position="53"/>
    </location>
</feature>
<feature type="transmembrane region" description="Helical" evidence="1">
    <location>
        <begin position="56"/>
        <end position="76"/>
    </location>
</feature>
<feature type="transmembrane region" description="Helical" evidence="1">
    <location>
        <begin position="107"/>
        <end position="127"/>
    </location>
</feature>
<feature type="transmembrane region" description="Helical" evidence="1">
    <location>
        <begin position="151"/>
        <end position="171"/>
    </location>
</feature>
<feature type="transmembrane region" description="Helical" evidence="1">
    <location>
        <begin position="180"/>
        <end position="200"/>
    </location>
</feature>
<feature type="transmembrane region" description="Helical" evidence="1">
    <location>
        <begin position="214"/>
        <end position="234"/>
    </location>
</feature>
<feature type="transmembrane region" description="Helical" evidence="1">
    <location>
        <begin position="247"/>
        <end position="267"/>
    </location>
</feature>
<feature type="transmembrane region" description="Helical" evidence="1">
    <location>
        <begin position="278"/>
        <end position="298"/>
    </location>
</feature>